<gene>
    <name evidence="1" type="primary">serC</name>
    <name type="ordered locus">NGO_1283</name>
</gene>
<sequence>MSLYPIYNFSAGPAVLPEAVLRTAQQEMSDYNGTGFSVMEMSHRSEMFLSILHHAEQDLRQLLKVPDNYKILFLQGGATTQFNMAAMNLAHGFRTADAVVTGNWSRIAYEQMSRLTDTEIRLAAHGGEQFDYLDLPPVETWDVAPDSAFVHFAVNETVNGLQYREVPRLSDGMPPLVCDMSSEILSREFDVADYGLIYAGAQKNIGPAGVTVVIVREDLLERCPNDIPDVFNYRSHLNRDGMYNTPSTYAIYMSGLVFRWLQAQGGVKKIEAVNRLKAQTLYETIDGSGGFYINDIHPDARSKMNVVFKTASEDLDRRFVLEAELQGLCLLKGYKSVGGMRASIYNAMPLEGVRALADFMRDFQRRYG</sequence>
<protein>
    <recommendedName>
        <fullName evidence="1">Phosphoserine aminotransferase</fullName>
        <ecNumber evidence="1">2.6.1.52</ecNumber>
    </recommendedName>
    <alternativeName>
        <fullName evidence="1">Phosphohydroxythreonine aminotransferase</fullName>
        <shortName evidence="1">PSAT</shortName>
    </alternativeName>
</protein>
<accession>Q5F7A0</accession>
<feature type="chain" id="PRO_0000150190" description="Phosphoserine aminotransferase">
    <location>
        <begin position="1"/>
        <end position="368"/>
    </location>
</feature>
<feature type="binding site" evidence="1">
    <location>
        <position position="44"/>
    </location>
    <ligand>
        <name>L-glutamate</name>
        <dbReference type="ChEBI" id="CHEBI:29985"/>
    </ligand>
</feature>
<feature type="binding site" evidence="1">
    <location>
        <begin position="78"/>
        <end position="79"/>
    </location>
    <ligand>
        <name>pyridoxal 5'-phosphate</name>
        <dbReference type="ChEBI" id="CHEBI:597326"/>
    </ligand>
</feature>
<feature type="binding site" evidence="1">
    <location>
        <position position="104"/>
    </location>
    <ligand>
        <name>pyridoxal 5'-phosphate</name>
        <dbReference type="ChEBI" id="CHEBI:597326"/>
    </ligand>
</feature>
<feature type="binding site" evidence="1">
    <location>
        <position position="157"/>
    </location>
    <ligand>
        <name>pyridoxal 5'-phosphate</name>
        <dbReference type="ChEBI" id="CHEBI:597326"/>
    </ligand>
</feature>
<feature type="binding site" evidence="1">
    <location>
        <position position="179"/>
    </location>
    <ligand>
        <name>pyridoxal 5'-phosphate</name>
        <dbReference type="ChEBI" id="CHEBI:597326"/>
    </ligand>
</feature>
<feature type="binding site" evidence="1">
    <location>
        <position position="202"/>
    </location>
    <ligand>
        <name>pyridoxal 5'-phosphate</name>
        <dbReference type="ChEBI" id="CHEBI:597326"/>
    </ligand>
</feature>
<feature type="binding site" evidence="1">
    <location>
        <begin position="244"/>
        <end position="245"/>
    </location>
    <ligand>
        <name>pyridoxal 5'-phosphate</name>
        <dbReference type="ChEBI" id="CHEBI:597326"/>
    </ligand>
</feature>
<feature type="modified residue" description="N6-(pyridoxal phosphate)lysine" evidence="1">
    <location>
        <position position="203"/>
    </location>
</feature>
<name>SERC_NEIG1</name>
<proteinExistence type="inferred from homology"/>
<keyword id="KW-0028">Amino-acid biosynthesis</keyword>
<keyword id="KW-0032">Aminotransferase</keyword>
<keyword id="KW-0963">Cytoplasm</keyword>
<keyword id="KW-0663">Pyridoxal phosphate</keyword>
<keyword id="KW-0664">Pyridoxine biosynthesis</keyword>
<keyword id="KW-1185">Reference proteome</keyword>
<keyword id="KW-0718">Serine biosynthesis</keyword>
<keyword id="KW-0808">Transferase</keyword>
<evidence type="ECO:0000255" key="1">
    <source>
        <dbReference type="HAMAP-Rule" id="MF_00160"/>
    </source>
</evidence>
<reference key="1">
    <citation type="submission" date="2003-03" db="EMBL/GenBank/DDBJ databases">
        <title>The complete genome sequence of Neisseria gonorrhoeae.</title>
        <authorList>
            <person name="Lewis L.A."/>
            <person name="Gillaspy A.F."/>
            <person name="McLaughlin R.E."/>
            <person name="Gipson M."/>
            <person name="Ducey T.F."/>
            <person name="Ownbey T."/>
            <person name="Hartman K."/>
            <person name="Nydick C."/>
            <person name="Carson M.B."/>
            <person name="Vaughn J."/>
            <person name="Thomson C."/>
            <person name="Song L."/>
            <person name="Lin S."/>
            <person name="Yuan X."/>
            <person name="Najar F."/>
            <person name="Zhan M."/>
            <person name="Ren Q."/>
            <person name="Zhu H."/>
            <person name="Qi S."/>
            <person name="Kenton S.M."/>
            <person name="Lai H."/>
            <person name="White J.D."/>
            <person name="Clifton S."/>
            <person name="Roe B.A."/>
            <person name="Dyer D.W."/>
        </authorList>
    </citation>
    <scope>NUCLEOTIDE SEQUENCE [LARGE SCALE GENOMIC DNA]</scope>
    <source>
        <strain>ATCC 700825 / FA 1090</strain>
    </source>
</reference>
<dbReference type="EC" id="2.6.1.52" evidence="1"/>
<dbReference type="EMBL" id="AE004969">
    <property type="protein sequence ID" value="AAW89937.1"/>
    <property type="molecule type" value="Genomic_DNA"/>
</dbReference>
<dbReference type="RefSeq" id="WP_003695923.1">
    <property type="nucleotide sequence ID" value="NC_002946.2"/>
</dbReference>
<dbReference type="RefSeq" id="YP_208349.1">
    <property type="nucleotide sequence ID" value="NC_002946.2"/>
</dbReference>
<dbReference type="SMR" id="Q5F7A0"/>
<dbReference type="STRING" id="242231.NGO_1283"/>
<dbReference type="GeneID" id="66753482"/>
<dbReference type="KEGG" id="ngo:NGO_1283"/>
<dbReference type="PATRIC" id="fig|242231.10.peg.1508"/>
<dbReference type="HOGENOM" id="CLU_034866_0_2_4"/>
<dbReference type="UniPathway" id="UPA00135">
    <property type="reaction ID" value="UER00197"/>
</dbReference>
<dbReference type="UniPathway" id="UPA00244">
    <property type="reaction ID" value="UER00311"/>
</dbReference>
<dbReference type="Proteomes" id="UP000000535">
    <property type="component" value="Chromosome"/>
</dbReference>
<dbReference type="GO" id="GO:0005737">
    <property type="term" value="C:cytoplasm"/>
    <property type="evidence" value="ECO:0007669"/>
    <property type="project" value="UniProtKB-SubCell"/>
</dbReference>
<dbReference type="GO" id="GO:0004648">
    <property type="term" value="F:O-phospho-L-serine:2-oxoglutarate aminotransferase activity"/>
    <property type="evidence" value="ECO:0007669"/>
    <property type="project" value="UniProtKB-UniRule"/>
</dbReference>
<dbReference type="GO" id="GO:0030170">
    <property type="term" value="F:pyridoxal phosphate binding"/>
    <property type="evidence" value="ECO:0007669"/>
    <property type="project" value="UniProtKB-UniRule"/>
</dbReference>
<dbReference type="GO" id="GO:0006564">
    <property type="term" value="P:L-serine biosynthetic process"/>
    <property type="evidence" value="ECO:0007669"/>
    <property type="project" value="UniProtKB-UniRule"/>
</dbReference>
<dbReference type="GO" id="GO:0008615">
    <property type="term" value="P:pyridoxine biosynthetic process"/>
    <property type="evidence" value="ECO:0007669"/>
    <property type="project" value="UniProtKB-UniRule"/>
</dbReference>
<dbReference type="CDD" id="cd00611">
    <property type="entry name" value="PSAT_like"/>
    <property type="match status" value="1"/>
</dbReference>
<dbReference type="FunFam" id="3.40.640.10:FF:000010">
    <property type="entry name" value="Phosphoserine aminotransferase"/>
    <property type="match status" value="1"/>
</dbReference>
<dbReference type="FunFam" id="3.90.1150.10:FF:000006">
    <property type="entry name" value="Phosphoserine aminotransferase"/>
    <property type="match status" value="1"/>
</dbReference>
<dbReference type="Gene3D" id="3.90.1150.10">
    <property type="entry name" value="Aspartate Aminotransferase, domain 1"/>
    <property type="match status" value="1"/>
</dbReference>
<dbReference type="Gene3D" id="3.40.640.10">
    <property type="entry name" value="Type I PLP-dependent aspartate aminotransferase-like (Major domain)"/>
    <property type="match status" value="1"/>
</dbReference>
<dbReference type="HAMAP" id="MF_00160">
    <property type="entry name" value="SerC_aminotrans_5"/>
    <property type="match status" value="1"/>
</dbReference>
<dbReference type="InterPro" id="IPR000192">
    <property type="entry name" value="Aminotrans_V_dom"/>
</dbReference>
<dbReference type="InterPro" id="IPR020578">
    <property type="entry name" value="Aminotrans_V_PyrdxlP_BS"/>
</dbReference>
<dbReference type="InterPro" id="IPR022278">
    <property type="entry name" value="Pser_aminoTfrase"/>
</dbReference>
<dbReference type="InterPro" id="IPR015424">
    <property type="entry name" value="PyrdxlP-dep_Trfase"/>
</dbReference>
<dbReference type="InterPro" id="IPR015421">
    <property type="entry name" value="PyrdxlP-dep_Trfase_major"/>
</dbReference>
<dbReference type="InterPro" id="IPR015422">
    <property type="entry name" value="PyrdxlP-dep_Trfase_small"/>
</dbReference>
<dbReference type="NCBIfam" id="NF003764">
    <property type="entry name" value="PRK05355.1"/>
    <property type="match status" value="1"/>
</dbReference>
<dbReference type="NCBIfam" id="TIGR01364">
    <property type="entry name" value="serC_1"/>
    <property type="match status" value="1"/>
</dbReference>
<dbReference type="PANTHER" id="PTHR43247">
    <property type="entry name" value="PHOSPHOSERINE AMINOTRANSFERASE"/>
    <property type="match status" value="1"/>
</dbReference>
<dbReference type="PANTHER" id="PTHR43247:SF1">
    <property type="entry name" value="PHOSPHOSERINE AMINOTRANSFERASE"/>
    <property type="match status" value="1"/>
</dbReference>
<dbReference type="Pfam" id="PF00266">
    <property type="entry name" value="Aminotran_5"/>
    <property type="match status" value="1"/>
</dbReference>
<dbReference type="PIRSF" id="PIRSF000525">
    <property type="entry name" value="SerC"/>
    <property type="match status" value="1"/>
</dbReference>
<dbReference type="SUPFAM" id="SSF53383">
    <property type="entry name" value="PLP-dependent transferases"/>
    <property type="match status" value="1"/>
</dbReference>
<dbReference type="PROSITE" id="PS00595">
    <property type="entry name" value="AA_TRANSFER_CLASS_5"/>
    <property type="match status" value="1"/>
</dbReference>
<organism>
    <name type="scientific">Neisseria gonorrhoeae (strain ATCC 700825 / FA 1090)</name>
    <dbReference type="NCBI Taxonomy" id="242231"/>
    <lineage>
        <taxon>Bacteria</taxon>
        <taxon>Pseudomonadati</taxon>
        <taxon>Pseudomonadota</taxon>
        <taxon>Betaproteobacteria</taxon>
        <taxon>Neisseriales</taxon>
        <taxon>Neisseriaceae</taxon>
        <taxon>Neisseria</taxon>
    </lineage>
</organism>
<comment type="function">
    <text evidence="1">Catalyzes the reversible conversion of 3-phosphohydroxypyruvate to phosphoserine and of 3-hydroxy-2-oxo-4-phosphonooxybutanoate to phosphohydroxythreonine.</text>
</comment>
<comment type="catalytic activity">
    <reaction evidence="1">
        <text>O-phospho-L-serine + 2-oxoglutarate = 3-phosphooxypyruvate + L-glutamate</text>
        <dbReference type="Rhea" id="RHEA:14329"/>
        <dbReference type="ChEBI" id="CHEBI:16810"/>
        <dbReference type="ChEBI" id="CHEBI:18110"/>
        <dbReference type="ChEBI" id="CHEBI:29985"/>
        <dbReference type="ChEBI" id="CHEBI:57524"/>
        <dbReference type="EC" id="2.6.1.52"/>
    </reaction>
</comment>
<comment type="catalytic activity">
    <reaction evidence="1">
        <text>4-(phosphooxy)-L-threonine + 2-oxoglutarate = (R)-3-hydroxy-2-oxo-4-phosphooxybutanoate + L-glutamate</text>
        <dbReference type="Rhea" id="RHEA:16573"/>
        <dbReference type="ChEBI" id="CHEBI:16810"/>
        <dbReference type="ChEBI" id="CHEBI:29985"/>
        <dbReference type="ChEBI" id="CHEBI:58452"/>
        <dbReference type="ChEBI" id="CHEBI:58538"/>
        <dbReference type="EC" id="2.6.1.52"/>
    </reaction>
</comment>
<comment type="cofactor">
    <cofactor evidence="1">
        <name>pyridoxal 5'-phosphate</name>
        <dbReference type="ChEBI" id="CHEBI:597326"/>
    </cofactor>
    <text evidence="1">Binds 1 pyridoxal phosphate per subunit.</text>
</comment>
<comment type="pathway">
    <text evidence="1">Amino-acid biosynthesis; L-serine biosynthesis; L-serine from 3-phospho-D-glycerate: step 2/3.</text>
</comment>
<comment type="pathway">
    <text evidence="1">Cofactor biosynthesis; pyridoxine 5'-phosphate biosynthesis; pyridoxine 5'-phosphate from D-erythrose 4-phosphate: step 3/5.</text>
</comment>
<comment type="subunit">
    <text evidence="1">Homodimer.</text>
</comment>
<comment type="subcellular location">
    <subcellularLocation>
        <location evidence="1">Cytoplasm</location>
    </subcellularLocation>
</comment>
<comment type="similarity">
    <text evidence="1">Belongs to the class-V pyridoxal-phosphate-dependent aminotransferase family. SerC subfamily.</text>
</comment>